<comment type="function">
    <text evidence="1">Probable component of the retromer complex, a complex required to retrieve lysosomal enzyme receptors (IGF2R and M6PR) from endosomes to the trans-Golgi network.</text>
</comment>
<comment type="subcellular location">
    <subcellularLocation>
        <location>Cytoplasm</location>
    </subcellularLocation>
    <subcellularLocation>
        <location>Membrane</location>
        <topology>Peripheral membrane protein</topology>
    </subcellularLocation>
    <text evidence="1">Does not localize to endosomes.</text>
</comment>
<comment type="similarity">
    <text evidence="2">Belongs to the VPS26 family.</text>
</comment>
<gene>
    <name type="primary">vps26bl</name>
    <name type="ORF">zgc:92676</name>
</gene>
<proteinExistence type="evidence at transcript level"/>
<keyword id="KW-0963">Cytoplasm</keyword>
<keyword id="KW-0472">Membrane</keyword>
<keyword id="KW-0653">Protein transport</keyword>
<keyword id="KW-1185">Reference proteome</keyword>
<keyword id="KW-0813">Transport</keyword>
<feature type="chain" id="PRO_0000247093" description="Vacuolar protein sorting-associated protein 26B-like">
    <location>
        <begin position="1"/>
        <end position="329"/>
    </location>
</feature>
<protein>
    <recommendedName>
        <fullName>Vacuolar protein sorting-associated protein 26B-like</fullName>
    </recommendedName>
    <alternativeName>
        <fullName>Vesicle protein sorting 26B-like</fullName>
    </alternativeName>
</protein>
<sequence>MSFFSFGQSAEIDIVLNDAETRKKAEHKTEDGKKDKYFLFYDGETVSGKVNVTLKTPGKRLEHQGFKIEFIGQIELYYDRGNHHEFVSLVKDLARPGEMAQSQTFDFEFTHVEKPYESYTGQNVKLRYFLRATVSRRLNDICKEMDIVVHTLSTYPELNSSIKMEVGIEDCLHIEFEYNKSKYHLKDVIVGKIYFLLVRIKIKHMEIDIIKRETTGTGPNVYHENDTIAKYEIMDGAPVRGESIPIRLFLAGYEMTPTMRDINKKFSVRYYLNLVLIDEEERRYFKQQEITLWREGDVARKSMSHQAAIASQRFEGSEKTLPQAKEDSN</sequence>
<accession>Q6DH23</accession>
<dbReference type="EMBL" id="BC076160">
    <property type="protein sequence ID" value="AAH76160.1"/>
    <property type="molecule type" value="mRNA"/>
</dbReference>
<dbReference type="RefSeq" id="NP_001002415.1">
    <property type="nucleotide sequence ID" value="NM_001002415.2"/>
</dbReference>
<dbReference type="SMR" id="Q6DH23"/>
<dbReference type="FunCoup" id="Q6DH23">
    <property type="interactions" value="3027"/>
</dbReference>
<dbReference type="STRING" id="7955.ENSDARP00000072251"/>
<dbReference type="PaxDb" id="7955-ENSDARP00000072251"/>
<dbReference type="GeneID" id="436688"/>
<dbReference type="KEGG" id="dre:436688"/>
<dbReference type="AGR" id="ZFIN:ZDB-GENE-040718-112"/>
<dbReference type="CTD" id="436688"/>
<dbReference type="ZFIN" id="ZDB-GENE-040718-112">
    <property type="gene designation" value="vps26bl"/>
</dbReference>
<dbReference type="eggNOG" id="KOG3063">
    <property type="taxonomic scope" value="Eukaryota"/>
</dbReference>
<dbReference type="InParanoid" id="Q6DH23"/>
<dbReference type="OrthoDB" id="3821113at2759"/>
<dbReference type="PhylomeDB" id="Q6DH23"/>
<dbReference type="PRO" id="PR:Q6DH23"/>
<dbReference type="Proteomes" id="UP000000437">
    <property type="component" value="Chromosome 10"/>
</dbReference>
<dbReference type="GO" id="GO:0005829">
    <property type="term" value="C:cytosol"/>
    <property type="evidence" value="ECO:0007669"/>
    <property type="project" value="GOC"/>
</dbReference>
<dbReference type="GO" id="GO:0005768">
    <property type="term" value="C:endosome"/>
    <property type="evidence" value="ECO:0000318"/>
    <property type="project" value="GO_Central"/>
</dbReference>
<dbReference type="GO" id="GO:0030904">
    <property type="term" value="C:retromer complex"/>
    <property type="evidence" value="ECO:0000318"/>
    <property type="project" value="GO_Central"/>
</dbReference>
<dbReference type="GO" id="GO:0006886">
    <property type="term" value="P:intracellular protein transport"/>
    <property type="evidence" value="ECO:0000318"/>
    <property type="project" value="GO_Central"/>
</dbReference>
<dbReference type="GO" id="GO:0042147">
    <property type="term" value="P:retrograde transport, endosome to Golgi"/>
    <property type="evidence" value="ECO:0000318"/>
    <property type="project" value="GO_Central"/>
</dbReference>
<dbReference type="FunFam" id="2.60.40.640:FF:000001">
    <property type="entry name" value="Vacuolar protein sorting-associated protein 26A"/>
    <property type="match status" value="1"/>
</dbReference>
<dbReference type="FunFam" id="2.60.40.640:FF:000002">
    <property type="entry name" value="Vacuolar protein sorting-associated protein 26A"/>
    <property type="match status" value="1"/>
</dbReference>
<dbReference type="Gene3D" id="2.60.40.640">
    <property type="match status" value="2"/>
</dbReference>
<dbReference type="InterPro" id="IPR014752">
    <property type="entry name" value="Arrestin-like_C"/>
</dbReference>
<dbReference type="InterPro" id="IPR028934">
    <property type="entry name" value="Vps26-related"/>
</dbReference>
<dbReference type="PANTHER" id="PTHR12233">
    <property type="entry name" value="VACUOLAR PROTEIN SORTING 26 RELATED"/>
    <property type="match status" value="1"/>
</dbReference>
<dbReference type="Pfam" id="PF03643">
    <property type="entry name" value="Vps26"/>
    <property type="match status" value="1"/>
</dbReference>
<organism>
    <name type="scientific">Danio rerio</name>
    <name type="common">Zebrafish</name>
    <name type="synonym">Brachydanio rerio</name>
    <dbReference type="NCBI Taxonomy" id="7955"/>
    <lineage>
        <taxon>Eukaryota</taxon>
        <taxon>Metazoa</taxon>
        <taxon>Chordata</taxon>
        <taxon>Craniata</taxon>
        <taxon>Vertebrata</taxon>
        <taxon>Euteleostomi</taxon>
        <taxon>Actinopterygii</taxon>
        <taxon>Neopterygii</taxon>
        <taxon>Teleostei</taxon>
        <taxon>Ostariophysi</taxon>
        <taxon>Cypriniformes</taxon>
        <taxon>Danionidae</taxon>
        <taxon>Danioninae</taxon>
        <taxon>Danio</taxon>
    </lineage>
</organism>
<name>V26BL_DANRE</name>
<evidence type="ECO:0000250" key="1"/>
<evidence type="ECO:0000305" key="2"/>
<reference key="1">
    <citation type="submission" date="2004-07" db="EMBL/GenBank/DDBJ databases">
        <authorList>
            <consortium name="NIH - Zebrafish Gene Collection (ZGC) project"/>
        </authorList>
    </citation>
    <scope>NUCLEOTIDE SEQUENCE [LARGE SCALE MRNA]</scope>
    <source>
        <tissue>Larval eye</tissue>
    </source>
</reference>